<evidence type="ECO:0000255" key="1">
    <source>
        <dbReference type="PROSITE-ProRule" id="PRU00037"/>
    </source>
</evidence>
<evidence type="ECO:0000269" key="2">
    <source>
    </source>
</evidence>
<evidence type="ECO:0000269" key="3">
    <source ref="3"/>
</evidence>
<evidence type="ECO:0000305" key="4"/>
<sequence length="581" mass="65541">MDEESLDGLLFKDHDFSSDLLRQLNSLRQSRILTDVSICAGAREIPCHRNVLASSSPYFRAMFCSSFREKSEAKVQLKGIDPPTLDQIVSYVYTGEAHIATDNVLPVMEAASMLQFPKLFEACSSYLQSQLAPSNCLGMIRLSEILSCETLKKKAREVALTSFPEVAASADLKELCALELRDYLGDDGLCGEEEKVFEALMVWIKHDLQARKRYMQELFKQVRLQYIHPAFFHHFIANDALLQSSPACQIILETAKRQMFSLCGTTVPDCKLLLHVPPRNSYQDFLILLGGRKDSQQTTRDVLLYSKQTGQWQSLAKLPTRLYKASAITLHRSIYVLGGMAVSSGRSLVSHNVYIFSLKLNQWRLGEPMLVARYSHRSTAHKNFIFSIGGIGEGQELMGSMERYDSICNVWESMASMPVGVLHPAVAVKDQRLYLFGGEDIMQNPVRLIQVYHISRNSWFKMETRMIKNVCAPAVVLGERIVIVGGYTRRILAYDPQSNKFVKCADMKDRRMHHGATVMGNKLYVTGGRRLTTDCNIEDSASFDCYDPETDTWTSQGQLPHKLFDHACLTLQCIPRTSGLP</sequence>
<dbReference type="EMBL" id="AB196636">
    <property type="protein sequence ID" value="BAE53438.1"/>
    <property type="molecule type" value="mRNA"/>
</dbReference>
<dbReference type="EMBL" id="AC135166">
    <property type="status" value="NOT_ANNOTATED_CDS"/>
    <property type="molecule type" value="Genomic_DNA"/>
</dbReference>
<dbReference type="EMBL" id="CH471060">
    <property type="protein sequence ID" value="EAW92045.1"/>
    <property type="molecule type" value="Genomic_DNA"/>
</dbReference>
<dbReference type="EMBL" id="BC127886">
    <property type="protein sequence ID" value="AAI27887.1"/>
    <property type="molecule type" value="mRNA"/>
</dbReference>
<dbReference type="CCDS" id="CCDS43766.1"/>
<dbReference type="RefSeq" id="NP_001075144.2">
    <property type="nucleotide sequence ID" value="NM_001081675.3"/>
</dbReference>
<dbReference type="RefSeq" id="XP_005250958.1">
    <property type="nucleotide sequence ID" value="XM_005250901.4"/>
</dbReference>
<dbReference type="RefSeq" id="XP_047277700.1">
    <property type="nucleotide sequence ID" value="XM_047421744.1"/>
</dbReference>
<dbReference type="SMR" id="Q2WGJ6"/>
<dbReference type="BioGRID" id="131043">
    <property type="interactions" value="91"/>
</dbReference>
<dbReference type="ComplexPortal" id="CPX-8242">
    <property type="entry name" value="CRL3 E3 ubiquitin ligase complex, KLHL38 variant"/>
</dbReference>
<dbReference type="FunCoup" id="Q2WGJ6">
    <property type="interactions" value="33"/>
</dbReference>
<dbReference type="IntAct" id="Q2WGJ6">
    <property type="interactions" value="96"/>
</dbReference>
<dbReference type="STRING" id="9606.ENSP00000321475"/>
<dbReference type="GlyGen" id="Q2WGJ6">
    <property type="glycosylation" value="3 sites, 1 O-linked glycan (3 sites)"/>
</dbReference>
<dbReference type="iPTMnet" id="Q2WGJ6"/>
<dbReference type="PhosphoSitePlus" id="Q2WGJ6"/>
<dbReference type="BioMuta" id="KLHL38"/>
<dbReference type="DMDM" id="296439315"/>
<dbReference type="jPOST" id="Q2WGJ6"/>
<dbReference type="MassIVE" id="Q2WGJ6"/>
<dbReference type="PaxDb" id="9606-ENSP00000321475"/>
<dbReference type="PeptideAtlas" id="Q2WGJ6"/>
<dbReference type="ProteomicsDB" id="61535"/>
<dbReference type="Antibodypedia" id="27017">
    <property type="antibodies" value="90 antibodies from 14 providers"/>
</dbReference>
<dbReference type="DNASU" id="340359"/>
<dbReference type="Ensembl" id="ENST00000325995.7">
    <property type="protein sequence ID" value="ENSP00000321475.7"/>
    <property type="gene ID" value="ENSG00000175946.9"/>
</dbReference>
<dbReference type="Ensembl" id="ENST00000684634.1">
    <property type="protein sequence ID" value="ENSP00000508228.1"/>
    <property type="gene ID" value="ENSG00000175946.9"/>
</dbReference>
<dbReference type="GeneID" id="340359"/>
<dbReference type="KEGG" id="hsa:340359"/>
<dbReference type="MANE-Select" id="ENST00000684634.1">
    <property type="protein sequence ID" value="ENSP00000508228.1"/>
    <property type="RefSeq nucleotide sequence ID" value="NM_001081675.3"/>
    <property type="RefSeq protein sequence ID" value="NP_001075144.2"/>
</dbReference>
<dbReference type="UCSC" id="uc003yqs.2">
    <property type="organism name" value="human"/>
</dbReference>
<dbReference type="AGR" id="HGNC:34435"/>
<dbReference type="CTD" id="340359"/>
<dbReference type="DisGeNET" id="340359"/>
<dbReference type="GeneCards" id="KLHL38"/>
<dbReference type="HGNC" id="HGNC:34435">
    <property type="gene designation" value="KLHL38"/>
</dbReference>
<dbReference type="HPA" id="ENSG00000175946">
    <property type="expression patterns" value="Tissue enhanced (heart muscle, skeletal muscle, tongue)"/>
</dbReference>
<dbReference type="neXtProt" id="NX_Q2WGJ6"/>
<dbReference type="OpenTargets" id="ENSG00000175946"/>
<dbReference type="PharmGKB" id="PA162393613"/>
<dbReference type="VEuPathDB" id="HostDB:ENSG00000175946"/>
<dbReference type="eggNOG" id="KOG4441">
    <property type="taxonomic scope" value="Eukaryota"/>
</dbReference>
<dbReference type="GeneTree" id="ENSGT00940000157647"/>
<dbReference type="HOGENOM" id="CLU_004253_14_6_1"/>
<dbReference type="InParanoid" id="Q2WGJ6"/>
<dbReference type="OMA" id="EVALTCF"/>
<dbReference type="OrthoDB" id="45365at2759"/>
<dbReference type="PAN-GO" id="Q2WGJ6">
    <property type="GO annotations" value="0 GO annotations based on evolutionary models"/>
</dbReference>
<dbReference type="PhylomeDB" id="Q2WGJ6"/>
<dbReference type="TreeFam" id="TF329218"/>
<dbReference type="PathwayCommons" id="Q2WGJ6"/>
<dbReference type="SignaLink" id="Q2WGJ6"/>
<dbReference type="BioGRID-ORCS" id="340359">
    <property type="hits" value="15 hits in 1183 CRISPR screens"/>
</dbReference>
<dbReference type="GenomeRNAi" id="340359"/>
<dbReference type="Pharos" id="Q2WGJ6">
    <property type="development level" value="Tdark"/>
</dbReference>
<dbReference type="PRO" id="PR:Q2WGJ6"/>
<dbReference type="Proteomes" id="UP000005640">
    <property type="component" value="Chromosome 8"/>
</dbReference>
<dbReference type="RNAct" id="Q2WGJ6">
    <property type="molecule type" value="protein"/>
</dbReference>
<dbReference type="Bgee" id="ENSG00000175946">
    <property type="expression patterns" value="Expressed in skeletal muscle tissue and 72 other cell types or tissues"/>
</dbReference>
<dbReference type="GO" id="GO:0031463">
    <property type="term" value="C:Cul3-RING ubiquitin ligase complex"/>
    <property type="evidence" value="ECO:0000318"/>
    <property type="project" value="GO_Central"/>
</dbReference>
<dbReference type="GO" id="GO:0005737">
    <property type="term" value="C:cytoplasm"/>
    <property type="evidence" value="ECO:0000318"/>
    <property type="project" value="GO_Central"/>
</dbReference>
<dbReference type="GO" id="GO:1990756">
    <property type="term" value="F:ubiquitin-like ligase-substrate adaptor activity"/>
    <property type="evidence" value="ECO:0000318"/>
    <property type="project" value="GO_Central"/>
</dbReference>
<dbReference type="GO" id="GO:0043161">
    <property type="term" value="P:proteasome-mediated ubiquitin-dependent protein catabolic process"/>
    <property type="evidence" value="ECO:0000318"/>
    <property type="project" value="GO_Central"/>
</dbReference>
<dbReference type="CDD" id="cd18476">
    <property type="entry name" value="BACK_KLHL38"/>
    <property type="match status" value="1"/>
</dbReference>
<dbReference type="CDD" id="cd18268">
    <property type="entry name" value="BTB_POZ_KLHL38"/>
    <property type="match status" value="1"/>
</dbReference>
<dbReference type="FunFam" id="1.25.40.420:FF:000001">
    <property type="entry name" value="Kelch-like family member 12"/>
    <property type="match status" value="1"/>
</dbReference>
<dbReference type="Gene3D" id="1.25.40.420">
    <property type="match status" value="1"/>
</dbReference>
<dbReference type="Gene3D" id="2.120.10.80">
    <property type="entry name" value="Kelch-type beta propeller"/>
    <property type="match status" value="2"/>
</dbReference>
<dbReference type="Gene3D" id="3.30.710.10">
    <property type="entry name" value="Potassium Channel Kv1.1, Chain A"/>
    <property type="match status" value="1"/>
</dbReference>
<dbReference type="InterPro" id="IPR011705">
    <property type="entry name" value="BACK"/>
</dbReference>
<dbReference type="InterPro" id="IPR056737">
    <property type="entry name" value="Beta-prop_ATRN-MKLN-like"/>
</dbReference>
<dbReference type="InterPro" id="IPR017096">
    <property type="entry name" value="BTB-kelch_protein"/>
</dbReference>
<dbReference type="InterPro" id="IPR000210">
    <property type="entry name" value="BTB/POZ_dom"/>
</dbReference>
<dbReference type="InterPro" id="IPR015915">
    <property type="entry name" value="Kelch-typ_b-propeller"/>
</dbReference>
<dbReference type="InterPro" id="IPR006652">
    <property type="entry name" value="Kelch_1"/>
</dbReference>
<dbReference type="InterPro" id="IPR030568">
    <property type="entry name" value="KLHL38_BACK"/>
</dbReference>
<dbReference type="InterPro" id="IPR011333">
    <property type="entry name" value="SKP1/BTB/POZ_sf"/>
</dbReference>
<dbReference type="PANTHER" id="PTHR24412">
    <property type="entry name" value="KELCH PROTEIN"/>
    <property type="match status" value="1"/>
</dbReference>
<dbReference type="PANTHER" id="PTHR24412:SF462">
    <property type="entry name" value="KELCH-LIKE PROTEIN 38"/>
    <property type="match status" value="1"/>
</dbReference>
<dbReference type="Pfam" id="PF07707">
    <property type="entry name" value="BACK"/>
    <property type="match status" value="1"/>
</dbReference>
<dbReference type="Pfam" id="PF24981">
    <property type="entry name" value="Beta-prop_ATRN-LZTR1"/>
    <property type="match status" value="1"/>
</dbReference>
<dbReference type="Pfam" id="PF00651">
    <property type="entry name" value="BTB"/>
    <property type="match status" value="1"/>
</dbReference>
<dbReference type="Pfam" id="PF01344">
    <property type="entry name" value="Kelch_1"/>
    <property type="match status" value="1"/>
</dbReference>
<dbReference type="Pfam" id="PF13418">
    <property type="entry name" value="Kelch_4"/>
    <property type="match status" value="1"/>
</dbReference>
<dbReference type="PIRSF" id="PIRSF037037">
    <property type="entry name" value="Kelch-like_protein_gigaxonin"/>
    <property type="match status" value="1"/>
</dbReference>
<dbReference type="SMART" id="SM00875">
    <property type="entry name" value="BACK"/>
    <property type="match status" value="1"/>
</dbReference>
<dbReference type="SMART" id="SM00225">
    <property type="entry name" value="BTB"/>
    <property type="match status" value="1"/>
</dbReference>
<dbReference type="SMART" id="SM00612">
    <property type="entry name" value="Kelch"/>
    <property type="match status" value="5"/>
</dbReference>
<dbReference type="SUPFAM" id="SSF117281">
    <property type="entry name" value="Kelch motif"/>
    <property type="match status" value="1"/>
</dbReference>
<dbReference type="SUPFAM" id="SSF54695">
    <property type="entry name" value="POZ domain"/>
    <property type="match status" value="1"/>
</dbReference>
<dbReference type="PROSITE" id="PS50097">
    <property type="entry name" value="BTB"/>
    <property type="match status" value="1"/>
</dbReference>
<keyword id="KW-0880">Kelch repeat</keyword>
<keyword id="KW-1185">Reference proteome</keyword>
<keyword id="KW-0677">Repeat</keyword>
<reference key="1">
    <citation type="submission" date="2004-12" db="EMBL/GenBank/DDBJ databases">
        <title>Novel gene on human chromosome 8.</title>
        <authorList>
            <person name="Shimizu N."/>
            <person name="Asakawa S."/>
            <person name="Shimizu A."/>
            <person name="Yamazaki S."/>
            <person name="Ishikawa S.K."/>
        </authorList>
    </citation>
    <scope>NUCLEOTIDE SEQUENCE [MRNA]</scope>
    <source>
        <tissue>Heart</tissue>
        <tissue>Skeletal muscle</tissue>
    </source>
</reference>
<reference key="2">
    <citation type="journal article" date="2006" name="Nature">
        <title>DNA sequence and analysis of human chromosome 8.</title>
        <authorList>
            <person name="Nusbaum C."/>
            <person name="Mikkelsen T.S."/>
            <person name="Zody M.C."/>
            <person name="Asakawa S."/>
            <person name="Taudien S."/>
            <person name="Garber M."/>
            <person name="Kodira C.D."/>
            <person name="Schueler M.G."/>
            <person name="Shimizu A."/>
            <person name="Whittaker C.A."/>
            <person name="Chang J.L."/>
            <person name="Cuomo C.A."/>
            <person name="Dewar K."/>
            <person name="FitzGerald M.G."/>
            <person name="Yang X."/>
            <person name="Allen N.R."/>
            <person name="Anderson S."/>
            <person name="Asakawa T."/>
            <person name="Blechschmidt K."/>
            <person name="Bloom T."/>
            <person name="Borowsky M.L."/>
            <person name="Butler J."/>
            <person name="Cook A."/>
            <person name="Corum B."/>
            <person name="DeArellano K."/>
            <person name="DeCaprio D."/>
            <person name="Dooley K.T."/>
            <person name="Dorris L. III"/>
            <person name="Engels R."/>
            <person name="Gloeckner G."/>
            <person name="Hafez N."/>
            <person name="Hagopian D.S."/>
            <person name="Hall J.L."/>
            <person name="Ishikawa S.K."/>
            <person name="Jaffe D.B."/>
            <person name="Kamat A."/>
            <person name="Kudoh J."/>
            <person name="Lehmann R."/>
            <person name="Lokitsang T."/>
            <person name="Macdonald P."/>
            <person name="Major J.E."/>
            <person name="Matthews C.D."/>
            <person name="Mauceli E."/>
            <person name="Menzel U."/>
            <person name="Mihalev A.H."/>
            <person name="Minoshima S."/>
            <person name="Murayama Y."/>
            <person name="Naylor J.W."/>
            <person name="Nicol R."/>
            <person name="Nguyen C."/>
            <person name="O'Leary S.B."/>
            <person name="O'Neill K."/>
            <person name="Parker S.C.J."/>
            <person name="Polley A."/>
            <person name="Raymond C.K."/>
            <person name="Reichwald K."/>
            <person name="Rodriguez J."/>
            <person name="Sasaki T."/>
            <person name="Schilhabel M."/>
            <person name="Siddiqui R."/>
            <person name="Smith C.L."/>
            <person name="Sneddon T.P."/>
            <person name="Talamas J.A."/>
            <person name="Tenzin P."/>
            <person name="Topham K."/>
            <person name="Venkataraman V."/>
            <person name="Wen G."/>
            <person name="Yamazaki S."/>
            <person name="Young S.K."/>
            <person name="Zeng Q."/>
            <person name="Zimmer A.R."/>
            <person name="Rosenthal A."/>
            <person name="Birren B.W."/>
            <person name="Platzer M."/>
            <person name="Shimizu N."/>
            <person name="Lander E.S."/>
        </authorList>
    </citation>
    <scope>NUCLEOTIDE SEQUENCE [LARGE SCALE GENOMIC DNA]</scope>
</reference>
<reference key="3">
    <citation type="submission" date="2005-07" db="EMBL/GenBank/DDBJ databases">
        <authorList>
            <person name="Mural R.J."/>
            <person name="Istrail S."/>
            <person name="Sutton G.G."/>
            <person name="Florea L."/>
            <person name="Halpern A.L."/>
            <person name="Mobarry C.M."/>
            <person name="Lippert R."/>
            <person name="Walenz B."/>
            <person name="Shatkay H."/>
            <person name="Dew I."/>
            <person name="Miller J.R."/>
            <person name="Flanigan M.J."/>
            <person name="Edwards N.J."/>
            <person name="Bolanos R."/>
            <person name="Fasulo D."/>
            <person name="Halldorsson B.V."/>
            <person name="Hannenhalli S."/>
            <person name="Turner R."/>
            <person name="Yooseph S."/>
            <person name="Lu F."/>
            <person name="Nusskern D.R."/>
            <person name="Shue B.C."/>
            <person name="Zheng X.H."/>
            <person name="Zhong F."/>
            <person name="Delcher A.L."/>
            <person name="Huson D.H."/>
            <person name="Kravitz S.A."/>
            <person name="Mouchard L."/>
            <person name="Reinert K."/>
            <person name="Remington K.A."/>
            <person name="Clark A.G."/>
            <person name="Waterman M.S."/>
            <person name="Eichler E.E."/>
            <person name="Adams M.D."/>
            <person name="Hunkapiller M.W."/>
            <person name="Myers E.W."/>
            <person name="Venter J.C."/>
        </authorList>
    </citation>
    <scope>NUCLEOTIDE SEQUENCE [LARGE SCALE GENOMIC DNA]</scope>
    <scope>VARIANTS VAL-334 AND LYS-346</scope>
</reference>
<reference key="4">
    <citation type="journal article" date="2004" name="Genome Res.">
        <title>The status, quality, and expansion of the NIH full-length cDNA project: the Mammalian Gene Collection (MGC).</title>
        <authorList>
            <consortium name="The MGC Project Team"/>
        </authorList>
    </citation>
    <scope>NUCLEOTIDE SEQUENCE [LARGE SCALE MRNA]</scope>
    <scope>VARIANTS VAL-334 AND LYS-346</scope>
</reference>
<feature type="chain" id="PRO_0000325809" description="Kelch-like protein 38">
    <location>
        <begin position="1"/>
        <end position="581"/>
    </location>
</feature>
<feature type="domain" description="BTB" evidence="1">
    <location>
        <begin position="34"/>
        <end position="101"/>
    </location>
</feature>
<feature type="domain" description="BACK">
    <location>
        <begin position="136"/>
        <end position="237"/>
    </location>
</feature>
<feature type="repeat" description="Kelch 1">
    <location>
        <begin position="285"/>
        <end position="332"/>
    </location>
</feature>
<feature type="repeat" description="Kelch 2">
    <location>
        <begin position="334"/>
        <end position="383"/>
    </location>
</feature>
<feature type="repeat" description="Kelch 3">
    <location>
        <begin position="384"/>
        <end position="431"/>
    </location>
</feature>
<feature type="repeat" description="Kelch 4">
    <location>
        <begin position="433"/>
        <end position="479"/>
    </location>
</feature>
<feature type="repeat" description="Kelch 5">
    <location>
        <begin position="480"/>
        <end position="521"/>
    </location>
</feature>
<feature type="repeat" description="Kelch 6">
    <location>
        <begin position="523"/>
        <end position="573"/>
    </location>
</feature>
<feature type="sequence variant" id="VAR_059437" description="In dbSNP:rs16898693.">
    <original>G</original>
    <variation>S</variation>
    <location>
        <position position="310"/>
    </location>
</feature>
<feature type="sequence variant" id="VAR_060485" description="In dbSNP:rs11784192." evidence="2 3">
    <original>I</original>
    <variation>V</variation>
    <location>
        <position position="334"/>
    </location>
</feature>
<feature type="sequence variant" id="VAR_060486" description="In dbSNP:rs11780509." evidence="2 3">
    <original>R</original>
    <variation>K</variation>
    <location>
        <position position="346"/>
    </location>
</feature>
<feature type="sequence variant" id="VAR_059438" description="In dbSNP:rs11784175.">
    <original>N</original>
    <variation>Y</variation>
    <location>
        <position position="352"/>
    </location>
</feature>
<feature type="sequence variant" id="VAR_059439" description="In dbSNP:rs16898691.">
    <original>G</original>
    <variation>R</variation>
    <location>
        <position position="394"/>
    </location>
</feature>
<feature type="sequence variant" id="VAR_059440" description="In dbSNP:rs11779866.">
    <original>C</original>
    <variation>Y</variation>
    <location>
        <position position="504"/>
    </location>
</feature>
<feature type="sequence conflict" description="In Ref. 3; EAW92045 and 4; AAI27887." evidence="4" ref="3 4">
    <original>H</original>
    <variation>R</variation>
    <location>
        <position position="98"/>
    </location>
</feature>
<name>KLH38_HUMAN</name>
<accession>Q2WGJ6</accession>
<accession>A0PK12</accession>
<comment type="interaction">
    <interactant intactId="EBI-6426443">
        <id>Q2WGJ6</id>
    </interactant>
    <interactant intactId="EBI-10173507">
        <id>Q6UY14-3</id>
        <label>ADAMTSL4</label>
    </interactant>
    <organismsDiffer>false</organismsDiffer>
    <experiments>3</experiments>
</comment>
<comment type="interaction">
    <interactant intactId="EBI-6426443">
        <id>Q2WGJ6</id>
    </interactant>
    <interactant intactId="EBI-12015266">
        <id>P18825</id>
        <label>ADRA2C</label>
    </interactant>
    <organismsDiffer>false</organismsDiffer>
    <experiments>3</experiments>
</comment>
<comment type="interaction">
    <interactant intactId="EBI-6426443">
        <id>Q2WGJ6</id>
    </interactant>
    <interactant intactId="EBI-712648">
        <id>O95994</id>
        <label>AGR2</label>
    </interactant>
    <organismsDiffer>false</organismsDiffer>
    <experiments>3</experiments>
</comment>
<comment type="interaction">
    <interactant intactId="EBI-6426443">
        <id>Q2WGJ6</id>
    </interactant>
    <interactant intactId="EBI-18394052">
        <id>Q8WXK4-2</id>
        <label>ASB12</label>
    </interactant>
    <organismsDiffer>false</organismsDiffer>
    <experiments>3</experiments>
</comment>
<comment type="interaction">
    <interactant intactId="EBI-6426443">
        <id>Q2WGJ6</id>
    </interactant>
    <interactant intactId="EBI-2548012">
        <id>Q9H2G9</id>
        <label>BLZF1</label>
    </interactant>
    <organismsDiffer>false</organismsDiffer>
    <experiments>8</experiments>
</comment>
<comment type="interaction">
    <interactant intactId="EBI-6426443">
        <id>Q2WGJ6</id>
    </interactant>
    <interactant intactId="EBI-12261896">
        <id>Q5T4B2</id>
        <label>CERCAM</label>
    </interactant>
    <organismsDiffer>false</organismsDiffer>
    <experiments>3</experiments>
</comment>
<comment type="interaction">
    <interactant intactId="EBI-6426443">
        <id>Q2WGJ6</id>
    </interactant>
    <interactant intactId="EBI-718615">
        <id>Q9H5F2</id>
        <label>CFAP68</label>
    </interactant>
    <organismsDiffer>false</organismsDiffer>
    <experiments>3</experiments>
</comment>
<comment type="interaction">
    <interactant intactId="EBI-6426443">
        <id>Q2WGJ6</id>
    </interactant>
    <interactant intactId="EBI-9038570">
        <id>P27918</id>
        <label>CFP</label>
    </interactant>
    <organismsDiffer>false</organismsDiffer>
    <experiments>3</experiments>
</comment>
<comment type="interaction">
    <interactant intactId="EBI-6426443">
        <id>Q2WGJ6</id>
    </interactant>
    <interactant intactId="EBI-1188472">
        <id>P78358</id>
        <label>CTAG1B</label>
    </interactant>
    <organismsDiffer>false</organismsDiffer>
    <experiments>5</experiments>
</comment>
<comment type="interaction">
    <interactant intactId="EBI-6426443">
        <id>Q2WGJ6</id>
    </interactant>
    <interactant intactId="EBI-3867333">
        <id>A8MQ03</id>
        <label>CYSRT1</label>
    </interactant>
    <organismsDiffer>false</organismsDiffer>
    <experiments>3</experiments>
</comment>
<comment type="interaction">
    <interactant intactId="EBI-6426443">
        <id>Q2WGJ6</id>
    </interactant>
    <interactant intactId="EBI-13309711">
        <id>Q99766-3</id>
        <label>DMAC2L</label>
    </interactant>
    <organismsDiffer>false</organismsDiffer>
    <experiments>3</experiments>
</comment>
<comment type="interaction">
    <interactant intactId="EBI-6426443">
        <id>Q2WGJ6</id>
    </interactant>
    <interactant intactId="EBI-947964">
        <id>Q16610</id>
        <label>ECM1</label>
    </interactant>
    <organismsDiffer>false</organismsDiffer>
    <experiments>3</experiments>
</comment>
<comment type="interaction">
    <interactant intactId="EBI-6426443">
        <id>Q2WGJ6</id>
    </interactant>
    <interactant intactId="EBI-18138793">
        <id>Q9C0B1-2</id>
        <label>FTO</label>
    </interactant>
    <organismsDiffer>false</organismsDiffer>
    <experiments>3</experiments>
</comment>
<comment type="interaction">
    <interactant intactId="EBI-6426443">
        <id>Q2WGJ6</id>
    </interactant>
    <interactant intactId="EBI-11163335">
        <id>Q9NYA3</id>
        <label>GOLGA6A</label>
    </interactant>
    <organismsDiffer>false</organismsDiffer>
    <experiments>3</experiments>
</comment>
<comment type="interaction">
    <interactant intactId="EBI-6426443">
        <id>Q2WGJ6</id>
    </interactant>
    <interactant intactId="EBI-11519926">
        <id>Q6PI77</id>
        <label>GPRASP3</label>
    </interactant>
    <organismsDiffer>false</organismsDiffer>
    <experiments>3</experiments>
</comment>
<comment type="interaction">
    <interactant intactId="EBI-6426443">
        <id>Q2WGJ6</id>
    </interactant>
    <interactant intactId="EBI-19954058">
        <id>O15499</id>
        <label>GSC2</label>
    </interactant>
    <organismsDiffer>false</organismsDiffer>
    <experiments>3</experiments>
</comment>
<comment type="interaction">
    <interactant intactId="EBI-6426443">
        <id>Q2WGJ6</id>
    </interactant>
    <interactant intactId="EBI-745201">
        <id>Q9BSH5</id>
        <label>HDHD3</label>
    </interactant>
    <organismsDiffer>false</organismsDiffer>
    <experiments>3</experiments>
</comment>
<comment type="interaction">
    <interactant intactId="EBI-6426443">
        <id>Q2WGJ6</id>
    </interactant>
    <interactant intactId="EBI-352572">
        <id>P08238</id>
        <label>HSP90AB1</label>
    </interactant>
    <organismsDiffer>false</organismsDiffer>
    <experiments>3</experiments>
</comment>
<comment type="interaction">
    <interactant intactId="EBI-6426443">
        <id>Q2WGJ6</id>
    </interactant>
    <interactant intactId="EBI-747204">
        <id>Q9UKT9</id>
        <label>IKZF3</label>
    </interactant>
    <organismsDiffer>false</organismsDiffer>
    <experiments>3</experiments>
</comment>
<comment type="interaction">
    <interactant intactId="EBI-6426443">
        <id>Q2WGJ6</id>
    </interactant>
    <interactant intactId="EBI-10693436">
        <id>Q9BS75</id>
        <label>KLHL20</label>
    </interactant>
    <organismsDiffer>false</organismsDiffer>
    <experiments>3</experiments>
</comment>
<comment type="interaction">
    <interactant intactId="EBI-6426443">
        <id>Q2WGJ6</id>
    </interactant>
    <interactant intactId="EBI-3044087">
        <id>Q7Z3Y8</id>
        <label>KRT27</label>
    </interactant>
    <organismsDiffer>false</organismsDiffer>
    <experiments>3</experiments>
</comment>
<comment type="interaction">
    <interactant intactId="EBI-6426443">
        <id>Q2WGJ6</id>
    </interactant>
    <interactant intactId="EBI-948001">
        <id>Q15323</id>
        <label>KRT31</label>
    </interactant>
    <organismsDiffer>false</organismsDiffer>
    <experiments>6</experiments>
</comment>
<comment type="interaction">
    <interactant intactId="EBI-6426443">
        <id>Q2WGJ6</id>
    </interactant>
    <interactant intactId="EBI-1047093">
        <id>O76011</id>
        <label>KRT34</label>
    </interactant>
    <organismsDiffer>false</organismsDiffer>
    <experiments>5</experiments>
</comment>
<comment type="interaction">
    <interactant intactId="EBI-6426443">
        <id>Q2WGJ6</id>
    </interactant>
    <interactant intactId="EBI-1058674">
        <id>Q92764</id>
        <label>KRT35</label>
    </interactant>
    <organismsDiffer>false</organismsDiffer>
    <experiments>3</experiments>
</comment>
<comment type="interaction">
    <interactant intactId="EBI-6426443">
        <id>Q2WGJ6</id>
    </interactant>
    <interactant intactId="EBI-1047263">
        <id>O76015</id>
        <label>KRT38</label>
    </interactant>
    <organismsDiffer>false</organismsDiffer>
    <experiments>6</experiments>
</comment>
<comment type="interaction">
    <interactant intactId="EBI-6426443">
        <id>Q2WGJ6</id>
    </interactant>
    <interactant intactId="EBI-11958242">
        <id>Q6A163</id>
        <label>KRT39</label>
    </interactant>
    <organismsDiffer>false</organismsDiffer>
    <experiments>3</experiments>
</comment>
<comment type="interaction">
    <interactant intactId="EBI-6426443">
        <id>Q2WGJ6</id>
    </interactant>
    <interactant intactId="EBI-10171697">
        <id>Q6A162</id>
        <label>KRT40</label>
    </interactant>
    <organismsDiffer>false</organismsDiffer>
    <experiments>3</experiments>
</comment>
<comment type="interaction">
    <interactant intactId="EBI-6426443">
        <id>Q2WGJ6</id>
    </interactant>
    <interactant intactId="EBI-1049371">
        <id>P78386</id>
        <label>KRT85</label>
    </interactant>
    <organismsDiffer>false</organismsDiffer>
    <experiments>3</experiments>
</comment>
<comment type="interaction">
    <interactant intactId="EBI-6426443">
        <id>Q2WGJ6</id>
    </interactant>
    <interactant intactId="EBI-11959885">
        <id>Q07627</id>
        <label>KRTAP1-1</label>
    </interactant>
    <organismsDiffer>false</organismsDiffer>
    <experiments>3</experiments>
</comment>
<comment type="interaction">
    <interactant intactId="EBI-6426443">
        <id>Q2WGJ6</id>
    </interactant>
    <interactant intactId="EBI-11749135">
        <id>Q8IUG1</id>
        <label>KRTAP1-3</label>
    </interactant>
    <organismsDiffer>false</organismsDiffer>
    <experiments>3</experiments>
</comment>
<comment type="interaction">
    <interactant intactId="EBI-6426443">
        <id>Q2WGJ6</id>
    </interactant>
    <interactant intactId="EBI-10172290">
        <id>P60409</id>
        <label>KRTAP10-7</label>
    </interactant>
    <organismsDiffer>false</organismsDiffer>
    <experiments>6</experiments>
</comment>
<comment type="interaction">
    <interactant intactId="EBI-6426443">
        <id>Q2WGJ6</id>
    </interactant>
    <interactant intactId="EBI-10171774">
        <id>P60410</id>
        <label>KRTAP10-8</label>
    </interactant>
    <organismsDiffer>false</organismsDiffer>
    <experiments>6</experiments>
</comment>
<comment type="interaction">
    <interactant intactId="EBI-6426443">
        <id>Q2WGJ6</id>
    </interactant>
    <interactant intactId="EBI-10172052">
        <id>P60411</id>
        <label>KRTAP10-9</label>
    </interactant>
    <organismsDiffer>false</organismsDiffer>
    <experiments>3</experiments>
</comment>
<comment type="interaction">
    <interactant intactId="EBI-6426443">
        <id>Q2WGJ6</id>
    </interactant>
    <interactant intactId="EBI-1052037">
        <id>Q8IUC1</id>
        <label>KRTAP11-1</label>
    </interactant>
    <organismsDiffer>false</organismsDiffer>
    <experiments>3</experiments>
</comment>
<comment type="interaction">
    <interactant intactId="EBI-6426443">
        <id>Q2WGJ6</id>
    </interactant>
    <interactant intactId="EBI-11953846">
        <id>Q52LG2</id>
        <label>KRTAP13-2</label>
    </interactant>
    <organismsDiffer>false</organismsDiffer>
    <experiments>3</experiments>
</comment>
<comment type="interaction">
    <interactant intactId="EBI-6426443">
        <id>Q2WGJ6</id>
    </interactant>
    <interactant intactId="EBI-14065470">
        <id>Q9BYR9</id>
        <label>KRTAP2-4</label>
    </interactant>
    <organismsDiffer>false</organismsDiffer>
    <experiments>3</experiments>
</comment>
<comment type="interaction">
    <interactant intactId="EBI-6426443">
        <id>Q2WGJ6</id>
    </interactant>
    <interactant intactId="EBI-3957694">
        <id>Q9BYR6</id>
        <label>KRTAP3-3</label>
    </interactant>
    <organismsDiffer>false</organismsDiffer>
    <experiments>3</experiments>
</comment>
<comment type="interaction">
    <interactant intactId="EBI-6426443">
        <id>Q2WGJ6</id>
    </interactant>
    <interactant intactId="EBI-10302392">
        <id>Q9BYQ6</id>
        <label>KRTAP4-11</label>
    </interactant>
    <organismsDiffer>false</organismsDiffer>
    <experiments>3</experiments>
</comment>
<comment type="interaction">
    <interactant intactId="EBI-6426443">
        <id>Q2WGJ6</id>
    </interactant>
    <interactant intactId="EBI-3958099">
        <id>P26371</id>
        <label>KRTAP5-9</label>
    </interactant>
    <organismsDiffer>false</organismsDiffer>
    <experiments>6</experiments>
</comment>
<comment type="interaction">
    <interactant intactId="EBI-6426443">
        <id>Q2WGJ6</id>
    </interactant>
    <interactant intactId="EBI-11962084">
        <id>Q3LI66</id>
        <label>KRTAP6-2</label>
    </interactant>
    <organismsDiffer>false</organismsDiffer>
    <experiments>3</experiments>
</comment>
<comment type="interaction">
    <interactant intactId="EBI-6426443">
        <id>Q2WGJ6</id>
    </interactant>
    <interactant intactId="EBI-1044640">
        <id>Q9BYQ4</id>
        <label>KRTAP9-2</label>
    </interactant>
    <organismsDiffer>false</organismsDiffer>
    <experiments>5</experiments>
</comment>
<comment type="interaction">
    <interactant intactId="EBI-6426443">
        <id>Q2WGJ6</id>
    </interactant>
    <interactant intactId="EBI-1043191">
        <id>Q9BYQ3</id>
        <label>KRTAP9-3</label>
    </interactant>
    <organismsDiffer>false</organismsDiffer>
    <experiments>3</experiments>
</comment>
<comment type="interaction">
    <interactant intactId="EBI-6426443">
        <id>Q2WGJ6</id>
    </interactant>
    <interactant intactId="EBI-11958364">
        <id>Q9BYQ0</id>
        <label>KRTAP9-8</label>
    </interactant>
    <organismsDiffer>false</organismsDiffer>
    <experiments>5</experiments>
</comment>
<comment type="interaction">
    <interactant intactId="EBI-6426443">
        <id>Q2WGJ6</id>
    </interactant>
    <interactant intactId="EBI-12039345">
        <id>Q9UBR4-2</id>
        <label>LHX3</label>
    </interactant>
    <organismsDiffer>false</organismsDiffer>
    <experiments>3</experiments>
</comment>
<comment type="interaction">
    <interactant intactId="EBI-6426443">
        <id>Q2WGJ6</id>
    </interactant>
    <interactant intactId="EBI-2865388">
        <id>Q969G2</id>
        <label>LHX4</label>
    </interactant>
    <organismsDiffer>false</organismsDiffer>
    <experiments>3</experiments>
</comment>
<comment type="interaction">
    <interactant intactId="EBI-6426443">
        <id>Q2WGJ6</id>
    </interactant>
    <interactant intactId="EBI-1045155">
        <id>P43360</id>
        <label>MAGEA6</label>
    </interactant>
    <organismsDiffer>false</organismsDiffer>
    <experiments>6</experiments>
</comment>
<comment type="interaction">
    <interactant intactId="EBI-6426443">
        <id>Q2WGJ6</id>
    </interactant>
    <interactant intactId="EBI-724076">
        <id>Q99750</id>
        <label>MDFI</label>
    </interactant>
    <organismsDiffer>false</organismsDiffer>
    <experiments>3</experiments>
</comment>
<comment type="interaction">
    <interactant intactId="EBI-6426443">
        <id>Q2WGJ6</id>
    </interactant>
    <interactant intactId="EBI-748397">
        <id>P50222</id>
        <label>MEOX2</label>
    </interactant>
    <organismsDiffer>false</organismsDiffer>
    <experiments>3</experiments>
</comment>
<comment type="interaction">
    <interactant intactId="EBI-6426443">
        <id>Q2WGJ6</id>
    </interactant>
    <interactant intactId="EBI-2340269">
        <id>Q13064</id>
        <label>MKRN3</label>
    </interactant>
    <organismsDiffer>false</organismsDiffer>
    <experiments>3</experiments>
</comment>
<comment type="interaction">
    <interactant intactId="EBI-6426443">
        <id>Q2WGJ6</id>
    </interactant>
    <interactant intactId="EBI-9675802">
        <id>Q6PF18</id>
        <label>MORN3</label>
    </interactant>
    <organismsDiffer>false</organismsDiffer>
    <experiments>3</experiments>
</comment>
<comment type="interaction">
    <interactant intactId="EBI-6426443">
        <id>Q2WGJ6</id>
    </interactant>
    <interactant intactId="EBI-945833">
        <id>Q7Z3S9</id>
        <label>NOTCH2NLA</label>
    </interactant>
    <organismsDiffer>false</organismsDiffer>
    <experiments>3</experiments>
</comment>
<comment type="interaction">
    <interactant intactId="EBI-6426443">
        <id>Q2WGJ6</id>
    </interactant>
    <interactant intactId="EBI-22310682">
        <id>P0DPK4</id>
        <label>NOTCH2NLC</label>
    </interactant>
    <organismsDiffer>false</organismsDiffer>
    <experiments>3</experiments>
</comment>
<comment type="interaction">
    <interactant intactId="EBI-6426443">
        <id>Q2WGJ6</id>
    </interactant>
    <interactant intactId="EBI-744342">
        <id>Q8IVD9</id>
        <label>NUDCD3</label>
    </interactant>
    <organismsDiffer>false</organismsDiffer>
    <experiments>2</experiments>
</comment>
<comment type="interaction">
    <interactant intactId="EBI-6426443">
        <id>Q2WGJ6</id>
    </interactant>
    <interactant intactId="EBI-536879">
        <id>O43482</id>
        <label>OIP5</label>
    </interactant>
    <organismsDiffer>false</organismsDiffer>
    <experiments>3</experiments>
</comment>
<comment type="interaction">
    <interactant intactId="EBI-6426443">
        <id>Q2WGJ6</id>
    </interactant>
    <interactant intactId="EBI-296331">
        <id>Q02548</id>
        <label>PAX5</label>
    </interactant>
    <organismsDiffer>false</organismsDiffer>
    <experiments>3</experiments>
</comment>
<comment type="interaction">
    <interactant intactId="EBI-6426443">
        <id>Q2WGJ6</id>
    </interactant>
    <interactant intactId="EBI-10302990">
        <id>Q9BYU1</id>
        <label>PBX4</label>
    </interactant>
    <organismsDiffer>false</organismsDiffer>
    <experiments>3</experiments>
</comment>
<comment type="interaction">
    <interactant intactId="EBI-6426443">
        <id>Q2WGJ6</id>
    </interactant>
    <interactant intactId="EBI-357275">
        <id>Q99471</id>
        <label>PFDN5</label>
    </interactant>
    <organismsDiffer>false</organismsDiffer>
    <experiments>3</experiments>
</comment>
<comment type="interaction">
    <interactant intactId="EBI-6426443">
        <id>Q2WGJ6</id>
    </interactant>
    <interactant intactId="EBI-769257">
        <id>Q9NRQ2</id>
        <label>PLSCR4</label>
    </interactant>
    <organismsDiffer>false</organismsDiffer>
    <experiments>3</experiments>
</comment>
<comment type="interaction">
    <interactant intactId="EBI-6426443">
        <id>Q2WGJ6</id>
    </interactant>
    <interactant intactId="EBI-11986735">
        <id>Q8WVV4-1</id>
        <label>POF1B</label>
    </interactant>
    <organismsDiffer>false</organismsDiffer>
    <experiments>3</experiments>
</comment>
<comment type="interaction">
    <interactant intactId="EBI-6426443">
        <id>Q2WGJ6</id>
    </interactant>
    <interactant intactId="EBI-943588">
        <id>Q16633</id>
        <label>POU2AF1</label>
    </interactant>
    <organismsDiffer>false</organismsDiffer>
    <experiments>3</experiments>
</comment>
<comment type="interaction">
    <interactant intactId="EBI-6426443">
        <id>Q2WGJ6</id>
    </interactant>
    <interactant intactId="EBI-1052678">
        <id>O76081</id>
        <label>RGS20</label>
    </interactant>
    <organismsDiffer>false</organismsDiffer>
    <experiments>3</experiments>
</comment>
<comment type="interaction">
    <interactant intactId="EBI-6426443">
        <id>Q2WGJ6</id>
    </interactant>
    <interactant intactId="EBI-10178530">
        <id>O76081-6</id>
        <label>RGS20</label>
    </interactant>
    <organismsDiffer>false</organismsDiffer>
    <experiments>3</experiments>
</comment>
<comment type="interaction">
    <interactant intactId="EBI-6426443">
        <id>Q2WGJ6</id>
    </interactant>
    <interactant intactId="EBI-12821217">
        <id>Q2I0M5</id>
        <label>RSPO4</label>
    </interactant>
    <organismsDiffer>false</organismsDiffer>
    <experiments>3</experiments>
</comment>
<comment type="interaction">
    <interactant intactId="EBI-6426443">
        <id>Q2WGJ6</id>
    </interactant>
    <interactant intactId="EBI-12806032">
        <id>Q16348</id>
        <label>SLC15A2</label>
    </interactant>
    <organismsDiffer>false</organismsDiffer>
    <experiments>3</experiments>
</comment>
<comment type="interaction">
    <interactant intactId="EBI-6426443">
        <id>Q2WGJ6</id>
    </interactant>
    <interactant intactId="EBI-354861">
        <id>Q9C004</id>
        <label>SPRY4</label>
    </interactant>
    <organismsDiffer>false</organismsDiffer>
    <experiments>3</experiments>
</comment>
<comment type="interaction">
    <interactant intactId="EBI-6426443">
        <id>Q2WGJ6</id>
    </interactant>
    <interactant intactId="EBI-2554984">
        <id>Q9Y6A5</id>
        <label>TACC3</label>
    </interactant>
    <organismsDiffer>false</organismsDiffer>
    <experiments>4</experiments>
</comment>
<comment type="interaction">
    <interactant intactId="EBI-6426443">
        <id>Q2WGJ6</id>
    </interactant>
    <interactant intactId="EBI-742268">
        <id>O75478</id>
        <label>TADA2A</label>
    </interactant>
    <organismsDiffer>false</organismsDiffer>
    <experiments>3</experiments>
</comment>
<comment type="interaction">
    <interactant intactId="EBI-6426443">
        <id>Q2WGJ6</id>
    </interactant>
    <interactant intactId="EBI-13636688">
        <id>P15884-3</id>
        <label>TCF4</label>
    </interactant>
    <organismsDiffer>false</organismsDiffer>
    <experiments>3</experiments>
</comment>
<comment type="interaction">
    <interactant intactId="EBI-6426443">
        <id>Q2WGJ6</id>
    </interactant>
    <interactant intactId="EBI-10180409">
        <id>Q969V4</id>
        <label>TEKT1</label>
    </interactant>
    <organismsDiffer>false</organismsDiffer>
    <experiments>3</experiments>
</comment>
<comment type="interaction">
    <interactant intactId="EBI-6426443">
        <id>Q2WGJ6</id>
    </interactant>
    <interactant intactId="EBI-10239812">
        <id>Q96M29</id>
        <label>TEKT5</label>
    </interactant>
    <organismsDiffer>false</organismsDiffer>
    <experiments>3</experiments>
</comment>
<comment type="interaction">
    <interactant intactId="EBI-6426443">
        <id>Q2WGJ6</id>
    </interactant>
    <interactant intactId="EBI-752030">
        <id>Q96A09</id>
        <label>TENT5B</label>
    </interactant>
    <organismsDiffer>false</organismsDiffer>
    <experiments>3</experiments>
</comment>
<comment type="interaction">
    <interactant intactId="EBI-6426443">
        <id>Q2WGJ6</id>
    </interactant>
    <interactant intactId="EBI-11139477">
        <id>Q96N21</id>
        <label>TEPSIN</label>
    </interactant>
    <organismsDiffer>false</organismsDiffer>
    <experiments>3</experiments>
</comment>
<comment type="interaction">
    <interactant intactId="EBI-6426443">
        <id>Q2WGJ6</id>
    </interactant>
    <interactant intactId="EBI-1200382">
        <id>Q9Y5J6</id>
        <label>TIMM10B</label>
    </interactant>
    <organismsDiffer>false</organismsDiffer>
    <experiments>3</experiments>
</comment>
<comment type="interaction">
    <interactant intactId="EBI-6426443">
        <id>Q2WGJ6</id>
    </interactant>
    <interactant intactId="EBI-359224">
        <id>Q13077</id>
        <label>TRAF1</label>
    </interactant>
    <organismsDiffer>false</organismsDiffer>
    <experiments>3</experiments>
</comment>
<comment type="interaction">
    <interactant intactId="EBI-6426443">
        <id>Q2WGJ6</id>
    </interactant>
    <interactant intactId="EBI-492476">
        <id>Q96RU7</id>
        <label>TRIB3</label>
    </interactant>
    <organismsDiffer>false</organismsDiffer>
    <experiments>3</experiments>
</comment>
<comment type="interaction">
    <interactant intactId="EBI-6426443">
        <id>Q2WGJ6</id>
    </interactant>
    <interactant intactId="EBI-5235829">
        <id>Q8IWZ5</id>
        <label>TRIM42</label>
    </interactant>
    <organismsDiffer>false</organismsDiffer>
    <experiments>6</experiments>
</comment>
<comment type="interaction">
    <interactant intactId="EBI-6426443">
        <id>Q2WGJ6</id>
    </interactant>
    <interactant intactId="EBI-2130429">
        <id>Q9BYV2</id>
        <label>TRIM54</label>
    </interactant>
    <organismsDiffer>false</organismsDiffer>
    <experiments>6</experiments>
</comment>
<comment type="interaction">
    <interactant intactId="EBI-6426443">
        <id>Q2WGJ6</id>
    </interactant>
    <interactant intactId="EBI-11525489">
        <id>Q86WT6-2</id>
        <label>TRIM69</label>
    </interactant>
    <organismsDiffer>false</organismsDiffer>
    <experiments>3</experiments>
</comment>
<comment type="interaction">
    <interactant intactId="EBI-6426443">
        <id>Q2WGJ6</id>
    </interactant>
    <interactant intactId="EBI-749812">
        <id>Q6PKC3</id>
        <label>TXNDC11</label>
    </interactant>
    <organismsDiffer>false</organismsDiffer>
    <experiments>3</experiments>
</comment>
<comment type="interaction">
    <interactant intactId="EBI-6426443">
        <id>Q2WGJ6</id>
    </interactant>
    <interactant intactId="EBI-10175863">
        <id>Q05086-2</id>
        <label>UBE3A</label>
    </interactant>
    <organismsDiffer>false</organismsDiffer>
    <experiments>3</experiments>
</comment>
<comment type="interaction">
    <interactant intactId="EBI-6426443">
        <id>Q2WGJ6</id>
    </interactant>
    <interactant intactId="EBI-739895">
        <id>Q8N6Y0</id>
        <label>USHBP1</label>
    </interactant>
    <organismsDiffer>false</organismsDiffer>
    <experiments>6</experiments>
</comment>
<comment type="interaction">
    <interactant intactId="EBI-6426443">
        <id>Q2WGJ6</id>
    </interactant>
    <interactant intactId="EBI-12175871">
        <id>Q8TCV5</id>
        <label>WFDC5</label>
    </interactant>
    <organismsDiffer>false</organismsDiffer>
    <experiments>3</experiments>
</comment>
<comment type="interaction">
    <interactant intactId="EBI-6426443">
        <id>Q2WGJ6</id>
    </interactant>
    <interactant intactId="EBI-12040603">
        <id>Q9NZC7-5</id>
        <label>WWOX</label>
    </interactant>
    <organismsDiffer>false</organismsDiffer>
    <experiments>3</experiments>
</comment>
<comment type="interaction">
    <interactant intactId="EBI-6426443">
        <id>Q2WGJ6</id>
    </interactant>
    <interactant intactId="EBI-9089622">
        <id>Q9BYN7</id>
        <label>ZNF341</label>
    </interactant>
    <organismsDiffer>false</organismsDiffer>
    <experiments>3</experiments>
</comment>
<proteinExistence type="evidence at protein level"/>
<protein>
    <recommendedName>
        <fullName>Kelch-like protein 38</fullName>
    </recommendedName>
</protein>
<organism>
    <name type="scientific">Homo sapiens</name>
    <name type="common">Human</name>
    <dbReference type="NCBI Taxonomy" id="9606"/>
    <lineage>
        <taxon>Eukaryota</taxon>
        <taxon>Metazoa</taxon>
        <taxon>Chordata</taxon>
        <taxon>Craniata</taxon>
        <taxon>Vertebrata</taxon>
        <taxon>Euteleostomi</taxon>
        <taxon>Mammalia</taxon>
        <taxon>Eutheria</taxon>
        <taxon>Euarchontoglires</taxon>
        <taxon>Primates</taxon>
        <taxon>Haplorrhini</taxon>
        <taxon>Catarrhini</taxon>
        <taxon>Hominidae</taxon>
        <taxon>Homo</taxon>
    </lineage>
</organism>
<gene>
    <name type="primary">KLHL38</name>
    <name type="synonym">C8orfK36</name>
</gene>